<reference key="1">
    <citation type="journal article" date="2013" name="Proc. Natl. Acad. Sci. U.S.A.">
        <title>Polynucleobacter necessarius, a model for genome reduction in both free-living and symbiotic bacteria.</title>
        <authorList>
            <person name="Boscaro V."/>
            <person name="Felletti M."/>
            <person name="Vannini C."/>
            <person name="Ackerman M.S."/>
            <person name="Chain P.S."/>
            <person name="Malfatti S."/>
            <person name="Vergez L.M."/>
            <person name="Shin M."/>
            <person name="Doak T.G."/>
            <person name="Lynch M."/>
            <person name="Petroni G."/>
        </authorList>
    </citation>
    <scope>NUCLEOTIDE SEQUENCE [LARGE SCALE GENOMIC DNA]</scope>
    <source>
        <strain>STIR1</strain>
    </source>
</reference>
<feature type="chain" id="PRO_1000130043" description="Chaperonin GroEL">
    <location>
        <begin position="1"/>
        <end position="547"/>
    </location>
</feature>
<feature type="binding site" evidence="1">
    <location>
        <begin position="30"/>
        <end position="33"/>
    </location>
    <ligand>
        <name>ATP</name>
        <dbReference type="ChEBI" id="CHEBI:30616"/>
    </ligand>
</feature>
<feature type="binding site" evidence="1">
    <location>
        <position position="51"/>
    </location>
    <ligand>
        <name>ATP</name>
        <dbReference type="ChEBI" id="CHEBI:30616"/>
    </ligand>
</feature>
<feature type="binding site" evidence="1">
    <location>
        <begin position="87"/>
        <end position="91"/>
    </location>
    <ligand>
        <name>ATP</name>
        <dbReference type="ChEBI" id="CHEBI:30616"/>
    </ligand>
</feature>
<feature type="binding site" evidence="1">
    <location>
        <position position="415"/>
    </location>
    <ligand>
        <name>ATP</name>
        <dbReference type="ChEBI" id="CHEBI:30616"/>
    </ligand>
</feature>
<feature type="binding site" evidence="1">
    <location>
        <begin position="479"/>
        <end position="481"/>
    </location>
    <ligand>
        <name>ATP</name>
        <dbReference type="ChEBI" id="CHEBI:30616"/>
    </ligand>
</feature>
<feature type="binding site" evidence="1">
    <location>
        <position position="495"/>
    </location>
    <ligand>
        <name>ATP</name>
        <dbReference type="ChEBI" id="CHEBI:30616"/>
    </ligand>
</feature>
<organism>
    <name type="scientific">Polynucleobacter necessarius subsp. necessarius (strain STIR1)</name>
    <dbReference type="NCBI Taxonomy" id="452638"/>
    <lineage>
        <taxon>Bacteria</taxon>
        <taxon>Pseudomonadati</taxon>
        <taxon>Pseudomonadota</taxon>
        <taxon>Betaproteobacteria</taxon>
        <taxon>Burkholderiales</taxon>
        <taxon>Burkholderiaceae</taxon>
        <taxon>Polynucleobacter</taxon>
    </lineage>
</organism>
<keyword id="KW-0067">ATP-binding</keyword>
<keyword id="KW-0143">Chaperone</keyword>
<keyword id="KW-0963">Cytoplasm</keyword>
<keyword id="KW-0413">Isomerase</keyword>
<keyword id="KW-0547">Nucleotide-binding</keyword>
<name>CH60_POLNS</name>
<dbReference type="EC" id="5.6.1.7" evidence="1"/>
<dbReference type="EMBL" id="CP001010">
    <property type="protein sequence ID" value="ACB44606.1"/>
    <property type="molecule type" value="Genomic_DNA"/>
</dbReference>
<dbReference type="SMR" id="B1XRX1"/>
<dbReference type="STRING" id="452638.Pnec_1518"/>
<dbReference type="KEGG" id="pne:Pnec_1518"/>
<dbReference type="eggNOG" id="COG0459">
    <property type="taxonomic scope" value="Bacteria"/>
</dbReference>
<dbReference type="HOGENOM" id="CLU_016503_3_0_4"/>
<dbReference type="OrthoDB" id="9766614at2"/>
<dbReference type="GO" id="GO:0005737">
    <property type="term" value="C:cytoplasm"/>
    <property type="evidence" value="ECO:0007669"/>
    <property type="project" value="UniProtKB-SubCell"/>
</dbReference>
<dbReference type="GO" id="GO:0005524">
    <property type="term" value="F:ATP binding"/>
    <property type="evidence" value="ECO:0007669"/>
    <property type="project" value="UniProtKB-UniRule"/>
</dbReference>
<dbReference type="GO" id="GO:0140662">
    <property type="term" value="F:ATP-dependent protein folding chaperone"/>
    <property type="evidence" value="ECO:0007669"/>
    <property type="project" value="InterPro"/>
</dbReference>
<dbReference type="GO" id="GO:0016853">
    <property type="term" value="F:isomerase activity"/>
    <property type="evidence" value="ECO:0007669"/>
    <property type="project" value="UniProtKB-KW"/>
</dbReference>
<dbReference type="GO" id="GO:0051082">
    <property type="term" value="F:unfolded protein binding"/>
    <property type="evidence" value="ECO:0007669"/>
    <property type="project" value="UniProtKB-UniRule"/>
</dbReference>
<dbReference type="GO" id="GO:0042026">
    <property type="term" value="P:protein refolding"/>
    <property type="evidence" value="ECO:0007669"/>
    <property type="project" value="UniProtKB-UniRule"/>
</dbReference>
<dbReference type="CDD" id="cd03344">
    <property type="entry name" value="GroEL"/>
    <property type="match status" value="1"/>
</dbReference>
<dbReference type="FunFam" id="3.50.7.10:FF:000001">
    <property type="entry name" value="60 kDa chaperonin"/>
    <property type="match status" value="1"/>
</dbReference>
<dbReference type="Gene3D" id="3.50.7.10">
    <property type="entry name" value="GroEL"/>
    <property type="match status" value="1"/>
</dbReference>
<dbReference type="Gene3D" id="1.10.560.10">
    <property type="entry name" value="GroEL-like equatorial domain"/>
    <property type="match status" value="1"/>
</dbReference>
<dbReference type="Gene3D" id="3.30.260.10">
    <property type="entry name" value="TCP-1-like chaperonin intermediate domain"/>
    <property type="match status" value="1"/>
</dbReference>
<dbReference type="HAMAP" id="MF_00600">
    <property type="entry name" value="CH60"/>
    <property type="match status" value="1"/>
</dbReference>
<dbReference type="InterPro" id="IPR018370">
    <property type="entry name" value="Chaperonin_Cpn60_CS"/>
</dbReference>
<dbReference type="InterPro" id="IPR001844">
    <property type="entry name" value="Cpn60/GroEL"/>
</dbReference>
<dbReference type="InterPro" id="IPR002423">
    <property type="entry name" value="Cpn60/GroEL/TCP-1"/>
</dbReference>
<dbReference type="InterPro" id="IPR027409">
    <property type="entry name" value="GroEL-like_apical_dom_sf"/>
</dbReference>
<dbReference type="InterPro" id="IPR027413">
    <property type="entry name" value="GROEL-like_equatorial_sf"/>
</dbReference>
<dbReference type="InterPro" id="IPR027410">
    <property type="entry name" value="TCP-1-like_intermed_sf"/>
</dbReference>
<dbReference type="NCBIfam" id="TIGR02348">
    <property type="entry name" value="GroEL"/>
    <property type="match status" value="1"/>
</dbReference>
<dbReference type="NCBIfam" id="NF000592">
    <property type="entry name" value="PRK00013.1"/>
    <property type="match status" value="1"/>
</dbReference>
<dbReference type="NCBIfam" id="NF009487">
    <property type="entry name" value="PRK12849.1"/>
    <property type="match status" value="1"/>
</dbReference>
<dbReference type="NCBIfam" id="NF009488">
    <property type="entry name" value="PRK12850.1"/>
    <property type="match status" value="1"/>
</dbReference>
<dbReference type="NCBIfam" id="NF009489">
    <property type="entry name" value="PRK12851.1"/>
    <property type="match status" value="1"/>
</dbReference>
<dbReference type="PANTHER" id="PTHR45633">
    <property type="entry name" value="60 KDA HEAT SHOCK PROTEIN, MITOCHONDRIAL"/>
    <property type="match status" value="1"/>
</dbReference>
<dbReference type="Pfam" id="PF00118">
    <property type="entry name" value="Cpn60_TCP1"/>
    <property type="match status" value="1"/>
</dbReference>
<dbReference type="PRINTS" id="PR00298">
    <property type="entry name" value="CHAPERONIN60"/>
</dbReference>
<dbReference type="SUPFAM" id="SSF52029">
    <property type="entry name" value="GroEL apical domain-like"/>
    <property type="match status" value="1"/>
</dbReference>
<dbReference type="SUPFAM" id="SSF48592">
    <property type="entry name" value="GroEL equatorial domain-like"/>
    <property type="match status" value="1"/>
</dbReference>
<dbReference type="SUPFAM" id="SSF54849">
    <property type="entry name" value="GroEL-intermediate domain like"/>
    <property type="match status" value="1"/>
</dbReference>
<dbReference type="PROSITE" id="PS00296">
    <property type="entry name" value="CHAPERONINS_CPN60"/>
    <property type="match status" value="1"/>
</dbReference>
<evidence type="ECO:0000255" key="1">
    <source>
        <dbReference type="HAMAP-Rule" id="MF_00600"/>
    </source>
</evidence>
<protein>
    <recommendedName>
        <fullName evidence="1">Chaperonin GroEL</fullName>
        <ecNumber evidence="1">5.6.1.7</ecNumber>
    </recommendedName>
    <alternativeName>
        <fullName evidence="1">60 kDa chaperonin</fullName>
    </alternativeName>
    <alternativeName>
        <fullName evidence="1">Chaperonin-60</fullName>
        <shortName evidence="1">Cpn60</shortName>
    </alternativeName>
</protein>
<sequence length="547" mass="57371">MAAKDVVFGDSARTKMVEGVNILANAVKTTLGPKGRNVVIERSFGGPIITKDGVSVAKEIELKDKLQNMGAQMVKEVASKTADIAGDGTTTATVLAQSIVREGMKYVVSGYNPLDLKRGIDKAVTAAIEELAKISKPCTTTKEIAQVGSISANSDQSIGQRIAEAMEKVGKEGVITVEDGKSLEDELEVVEGMQFDRGYLSPYFINQPEKQVAVLESPYVLLFDKKIANIRDLLPVLEQVAKSGRPLLIIAEDVEGEALATLVVNNIRGIIKTCAVKAPGFGDRRKAMLEDIAILTGGIVIAEEIGLTLEKTTLEHLGQAKRLEVGKENTIIIDGAGDAKAIEARVKNIRVQVEEATSDYDKEKLQERVAKLAGGVAVIRVGAATEVEMKEKKARVDDALHATRAAVEEGIIPGGGVALIRAMQGIKGLKGDNADQDAGISIVLRAMQEPLRTIVSNAGEDAGVVVNAVQASKGNNGYNAATGEYGDLVAQGVIDPTKVTKAALVNAASVAGLLLTTDCAISEAPKDESAGGGMPDMGGMGGMGGMM</sequence>
<proteinExistence type="inferred from homology"/>
<gene>
    <name evidence="1" type="primary">groEL</name>
    <name evidence="1" type="synonym">groL</name>
    <name type="ordered locus">Pnec_1518</name>
</gene>
<comment type="function">
    <text evidence="1">Together with its co-chaperonin GroES, plays an essential role in assisting protein folding. The GroEL-GroES system forms a nano-cage that allows encapsulation of the non-native substrate proteins and provides a physical environment optimized to promote and accelerate protein folding.</text>
</comment>
<comment type="catalytic activity">
    <reaction evidence="1">
        <text>ATP + H2O + a folded polypeptide = ADP + phosphate + an unfolded polypeptide.</text>
        <dbReference type="EC" id="5.6.1.7"/>
    </reaction>
</comment>
<comment type="subunit">
    <text evidence="1">Forms a cylinder of 14 subunits composed of two heptameric rings stacked back-to-back. Interacts with the co-chaperonin GroES.</text>
</comment>
<comment type="subcellular location">
    <subcellularLocation>
        <location evidence="1">Cytoplasm</location>
    </subcellularLocation>
</comment>
<comment type="similarity">
    <text evidence="1">Belongs to the chaperonin (HSP60) family.</text>
</comment>
<accession>B1XRX1</accession>